<proteinExistence type="inferred from homology"/>
<name>RL31_PROM2</name>
<accession>A8G734</accession>
<organism>
    <name type="scientific">Prochlorococcus marinus (strain MIT 9215)</name>
    <dbReference type="NCBI Taxonomy" id="93060"/>
    <lineage>
        <taxon>Bacteria</taxon>
        <taxon>Bacillati</taxon>
        <taxon>Cyanobacteriota</taxon>
        <taxon>Cyanophyceae</taxon>
        <taxon>Synechococcales</taxon>
        <taxon>Prochlorococcaceae</taxon>
        <taxon>Prochlorococcus</taxon>
    </lineage>
</organism>
<comment type="function">
    <text evidence="1">Binds the 23S rRNA.</text>
</comment>
<comment type="subunit">
    <text evidence="1">Part of the 50S ribosomal subunit.</text>
</comment>
<comment type="similarity">
    <text evidence="1">Belongs to the bacterial ribosomal protein bL31 family. Type A subfamily.</text>
</comment>
<keyword id="KW-0687">Ribonucleoprotein</keyword>
<keyword id="KW-0689">Ribosomal protein</keyword>
<keyword id="KW-0694">RNA-binding</keyword>
<keyword id="KW-0699">rRNA-binding</keyword>
<gene>
    <name evidence="1" type="primary">rpmE</name>
    <name evidence="1" type="synonym">rpl31</name>
    <name type="ordered locus">P9215_18021</name>
</gene>
<sequence>MPKSEIHPKWYPDAKVICNGEVVMTTGSTQPELHVDVWSGNHPFFTGTQKILDTEGRVDRFMKKYGMGSANSATSKEQKADKDSQK</sequence>
<dbReference type="EMBL" id="CP000825">
    <property type="protein sequence ID" value="ABV51415.1"/>
    <property type="molecule type" value="Genomic_DNA"/>
</dbReference>
<dbReference type="RefSeq" id="WP_012008428.1">
    <property type="nucleotide sequence ID" value="NC_009840.1"/>
</dbReference>
<dbReference type="STRING" id="93060.P9215_18021"/>
<dbReference type="KEGG" id="pmh:P9215_18021"/>
<dbReference type="eggNOG" id="COG0254">
    <property type="taxonomic scope" value="Bacteria"/>
</dbReference>
<dbReference type="HOGENOM" id="CLU_114306_1_2_3"/>
<dbReference type="OrthoDB" id="9803251at2"/>
<dbReference type="Proteomes" id="UP000002014">
    <property type="component" value="Chromosome"/>
</dbReference>
<dbReference type="GO" id="GO:1990904">
    <property type="term" value="C:ribonucleoprotein complex"/>
    <property type="evidence" value="ECO:0007669"/>
    <property type="project" value="UniProtKB-KW"/>
</dbReference>
<dbReference type="GO" id="GO:0005840">
    <property type="term" value="C:ribosome"/>
    <property type="evidence" value="ECO:0007669"/>
    <property type="project" value="UniProtKB-KW"/>
</dbReference>
<dbReference type="GO" id="GO:0019843">
    <property type="term" value="F:rRNA binding"/>
    <property type="evidence" value="ECO:0007669"/>
    <property type="project" value="UniProtKB-KW"/>
</dbReference>
<dbReference type="GO" id="GO:0003735">
    <property type="term" value="F:structural constituent of ribosome"/>
    <property type="evidence" value="ECO:0007669"/>
    <property type="project" value="InterPro"/>
</dbReference>
<dbReference type="GO" id="GO:0006412">
    <property type="term" value="P:translation"/>
    <property type="evidence" value="ECO:0007669"/>
    <property type="project" value="UniProtKB-UniRule"/>
</dbReference>
<dbReference type="Gene3D" id="4.10.830.30">
    <property type="entry name" value="Ribosomal protein L31"/>
    <property type="match status" value="1"/>
</dbReference>
<dbReference type="HAMAP" id="MF_00501">
    <property type="entry name" value="Ribosomal_bL31_1"/>
    <property type="match status" value="1"/>
</dbReference>
<dbReference type="InterPro" id="IPR034704">
    <property type="entry name" value="Ribosomal_bL28/bL31-like_sf"/>
</dbReference>
<dbReference type="InterPro" id="IPR002150">
    <property type="entry name" value="Ribosomal_bL31"/>
</dbReference>
<dbReference type="InterPro" id="IPR027491">
    <property type="entry name" value="Ribosomal_bL31_A"/>
</dbReference>
<dbReference type="InterPro" id="IPR042105">
    <property type="entry name" value="Ribosomal_bL31_sf"/>
</dbReference>
<dbReference type="NCBIfam" id="TIGR00105">
    <property type="entry name" value="L31"/>
    <property type="match status" value="1"/>
</dbReference>
<dbReference type="NCBIfam" id="NF000612">
    <property type="entry name" value="PRK00019.1"/>
    <property type="match status" value="1"/>
</dbReference>
<dbReference type="NCBIfam" id="NF001809">
    <property type="entry name" value="PRK00528.1"/>
    <property type="match status" value="1"/>
</dbReference>
<dbReference type="PANTHER" id="PTHR33280">
    <property type="entry name" value="50S RIBOSOMAL PROTEIN L31, CHLOROPLASTIC"/>
    <property type="match status" value="1"/>
</dbReference>
<dbReference type="PANTHER" id="PTHR33280:SF1">
    <property type="entry name" value="LARGE RIBOSOMAL SUBUNIT PROTEIN BL31C"/>
    <property type="match status" value="1"/>
</dbReference>
<dbReference type="Pfam" id="PF01197">
    <property type="entry name" value="Ribosomal_L31"/>
    <property type="match status" value="1"/>
</dbReference>
<dbReference type="PRINTS" id="PR01249">
    <property type="entry name" value="RIBOSOMALL31"/>
</dbReference>
<dbReference type="SUPFAM" id="SSF143800">
    <property type="entry name" value="L28p-like"/>
    <property type="match status" value="1"/>
</dbReference>
<dbReference type="PROSITE" id="PS01143">
    <property type="entry name" value="RIBOSOMAL_L31"/>
    <property type="match status" value="1"/>
</dbReference>
<protein>
    <recommendedName>
        <fullName evidence="1">Large ribosomal subunit protein bL31</fullName>
    </recommendedName>
    <alternativeName>
        <fullName evidence="3">50S ribosomal protein L31</fullName>
    </alternativeName>
</protein>
<evidence type="ECO:0000255" key="1">
    <source>
        <dbReference type="HAMAP-Rule" id="MF_00501"/>
    </source>
</evidence>
<evidence type="ECO:0000256" key="2">
    <source>
        <dbReference type="SAM" id="MobiDB-lite"/>
    </source>
</evidence>
<evidence type="ECO:0000305" key="3"/>
<feature type="chain" id="PRO_1000126689" description="Large ribosomal subunit protein bL31">
    <location>
        <begin position="1"/>
        <end position="86"/>
    </location>
</feature>
<feature type="region of interest" description="Disordered" evidence="2">
    <location>
        <begin position="66"/>
        <end position="86"/>
    </location>
</feature>
<feature type="compositionally biased region" description="Basic and acidic residues" evidence="2">
    <location>
        <begin position="76"/>
        <end position="86"/>
    </location>
</feature>
<reference key="1">
    <citation type="journal article" date="2007" name="PLoS Genet.">
        <title>Patterns and implications of gene gain and loss in the evolution of Prochlorococcus.</title>
        <authorList>
            <person name="Kettler G.C."/>
            <person name="Martiny A.C."/>
            <person name="Huang K."/>
            <person name="Zucker J."/>
            <person name="Coleman M.L."/>
            <person name="Rodrigue S."/>
            <person name="Chen F."/>
            <person name="Lapidus A."/>
            <person name="Ferriera S."/>
            <person name="Johnson J."/>
            <person name="Steglich C."/>
            <person name="Church G.M."/>
            <person name="Richardson P."/>
            <person name="Chisholm S.W."/>
        </authorList>
    </citation>
    <scope>NUCLEOTIDE SEQUENCE [LARGE SCALE GENOMIC DNA]</scope>
    <source>
        <strain>MIT 9215</strain>
    </source>
</reference>